<dbReference type="EMBL" id="CP000890">
    <property type="protein sequence ID" value="ABX78724.1"/>
    <property type="molecule type" value="Genomic_DNA"/>
</dbReference>
<dbReference type="RefSeq" id="WP_012220219.1">
    <property type="nucleotide sequence ID" value="NC_010117.1"/>
</dbReference>
<dbReference type="SMR" id="A9NBR0"/>
<dbReference type="KEGG" id="cbs:COXBURSA331_A0551"/>
<dbReference type="HOGENOM" id="CLU_077636_1_0_6"/>
<dbReference type="GO" id="GO:0005737">
    <property type="term" value="C:cytoplasm"/>
    <property type="evidence" value="ECO:0007669"/>
    <property type="project" value="UniProtKB-SubCell"/>
</dbReference>
<dbReference type="GO" id="GO:0005840">
    <property type="term" value="C:ribosome"/>
    <property type="evidence" value="ECO:0007669"/>
    <property type="project" value="InterPro"/>
</dbReference>
<dbReference type="GO" id="GO:0043022">
    <property type="term" value="F:ribosome binding"/>
    <property type="evidence" value="ECO:0007669"/>
    <property type="project" value="InterPro"/>
</dbReference>
<dbReference type="GO" id="GO:0042274">
    <property type="term" value="P:ribosomal small subunit biogenesis"/>
    <property type="evidence" value="ECO:0007669"/>
    <property type="project" value="UniProtKB-UniRule"/>
</dbReference>
<dbReference type="GO" id="GO:0006364">
    <property type="term" value="P:rRNA processing"/>
    <property type="evidence" value="ECO:0007669"/>
    <property type="project" value="UniProtKB-UniRule"/>
</dbReference>
<dbReference type="Gene3D" id="2.30.30.240">
    <property type="entry name" value="PRC-barrel domain"/>
    <property type="match status" value="1"/>
</dbReference>
<dbReference type="Gene3D" id="2.40.30.60">
    <property type="entry name" value="RimM"/>
    <property type="match status" value="1"/>
</dbReference>
<dbReference type="HAMAP" id="MF_00014">
    <property type="entry name" value="Ribosome_mat_RimM"/>
    <property type="match status" value="1"/>
</dbReference>
<dbReference type="InterPro" id="IPR011033">
    <property type="entry name" value="PRC_barrel-like_sf"/>
</dbReference>
<dbReference type="InterPro" id="IPR056792">
    <property type="entry name" value="PRC_RimM"/>
</dbReference>
<dbReference type="InterPro" id="IPR011961">
    <property type="entry name" value="RimM"/>
</dbReference>
<dbReference type="InterPro" id="IPR002676">
    <property type="entry name" value="RimM_N"/>
</dbReference>
<dbReference type="InterPro" id="IPR036976">
    <property type="entry name" value="RimM_N_sf"/>
</dbReference>
<dbReference type="InterPro" id="IPR009000">
    <property type="entry name" value="Transl_B-barrel_sf"/>
</dbReference>
<dbReference type="NCBIfam" id="TIGR02273">
    <property type="entry name" value="16S_RimM"/>
    <property type="match status" value="1"/>
</dbReference>
<dbReference type="PANTHER" id="PTHR33692">
    <property type="entry name" value="RIBOSOME MATURATION FACTOR RIMM"/>
    <property type="match status" value="1"/>
</dbReference>
<dbReference type="PANTHER" id="PTHR33692:SF1">
    <property type="entry name" value="RIBOSOME MATURATION FACTOR RIMM"/>
    <property type="match status" value="1"/>
</dbReference>
<dbReference type="Pfam" id="PF24986">
    <property type="entry name" value="PRC_RimM"/>
    <property type="match status" value="1"/>
</dbReference>
<dbReference type="Pfam" id="PF01782">
    <property type="entry name" value="RimM"/>
    <property type="match status" value="1"/>
</dbReference>
<dbReference type="SUPFAM" id="SSF50346">
    <property type="entry name" value="PRC-barrel domain"/>
    <property type="match status" value="1"/>
</dbReference>
<dbReference type="SUPFAM" id="SSF50447">
    <property type="entry name" value="Translation proteins"/>
    <property type="match status" value="1"/>
</dbReference>
<protein>
    <recommendedName>
        <fullName evidence="1">Ribosome maturation factor RimM</fullName>
    </recommendedName>
</protein>
<comment type="function">
    <text evidence="1">An accessory protein needed during the final step in the assembly of 30S ribosomal subunit, possibly for assembly of the head region. Essential for efficient processing of 16S rRNA. May be needed both before and after RbfA during the maturation of 16S rRNA. It has affinity for free ribosomal 30S subunits but not for 70S ribosomes.</text>
</comment>
<comment type="subunit">
    <text evidence="1">Binds ribosomal protein uS19.</text>
</comment>
<comment type="subcellular location">
    <subcellularLocation>
        <location evidence="1">Cytoplasm</location>
    </subcellularLocation>
</comment>
<comment type="domain">
    <text evidence="1">The PRC barrel domain binds ribosomal protein uS19.</text>
</comment>
<comment type="similarity">
    <text evidence="1">Belongs to the RimM family.</text>
</comment>
<gene>
    <name evidence="1" type="primary">rimM</name>
    <name type="ordered locus">COXBURSA331_A0551</name>
</gene>
<sequence length="168" mass="19280">MKPNDKVIIGRLARPYGLRGWIKVVSFTHPIDNLLNHPTWQIQHNNEWQPLKLQAGKLHEPFLVVKLENIDDPETAKHYTNDLIAIERRALGALKEGDYYWTDLIGLAVVNTHGIELGTVDSLIETGSNDVLVVRSKERERLIPYTSYTIQSIDLEKKIIVVEWDADF</sequence>
<evidence type="ECO:0000255" key="1">
    <source>
        <dbReference type="HAMAP-Rule" id="MF_00014"/>
    </source>
</evidence>
<accession>A9NBR0</accession>
<reference key="1">
    <citation type="submission" date="2007-11" db="EMBL/GenBank/DDBJ databases">
        <title>Genome sequencing of phylogenetically and phenotypically diverse Coxiella burnetii isolates.</title>
        <authorList>
            <person name="Seshadri R."/>
            <person name="Samuel J.E."/>
        </authorList>
    </citation>
    <scope>NUCLEOTIDE SEQUENCE [LARGE SCALE GENOMIC DNA]</scope>
    <source>
        <strain>RSA 331 / Henzerling II</strain>
    </source>
</reference>
<proteinExistence type="inferred from homology"/>
<organism>
    <name type="scientific">Coxiella burnetii (strain RSA 331 / Henzerling II)</name>
    <dbReference type="NCBI Taxonomy" id="360115"/>
    <lineage>
        <taxon>Bacteria</taxon>
        <taxon>Pseudomonadati</taxon>
        <taxon>Pseudomonadota</taxon>
        <taxon>Gammaproteobacteria</taxon>
        <taxon>Legionellales</taxon>
        <taxon>Coxiellaceae</taxon>
        <taxon>Coxiella</taxon>
    </lineage>
</organism>
<name>RIMM_COXBR</name>
<feature type="chain" id="PRO_1000074025" description="Ribosome maturation factor RimM">
    <location>
        <begin position="1"/>
        <end position="168"/>
    </location>
</feature>
<feature type="domain" description="PRC barrel" evidence="1">
    <location>
        <begin position="96"/>
        <end position="168"/>
    </location>
</feature>
<keyword id="KW-0143">Chaperone</keyword>
<keyword id="KW-0963">Cytoplasm</keyword>
<keyword id="KW-0690">Ribosome biogenesis</keyword>
<keyword id="KW-0698">rRNA processing</keyword>